<organism>
    <name type="scientific">Sclerotinia sclerotiorum (strain ATCC 18683 / 1980 / Ss-1)</name>
    <name type="common">White mold</name>
    <name type="synonym">Whetzelinia sclerotiorum</name>
    <dbReference type="NCBI Taxonomy" id="665079"/>
    <lineage>
        <taxon>Eukaryota</taxon>
        <taxon>Fungi</taxon>
        <taxon>Dikarya</taxon>
        <taxon>Ascomycota</taxon>
        <taxon>Pezizomycotina</taxon>
        <taxon>Leotiomycetes</taxon>
        <taxon>Helotiales</taxon>
        <taxon>Sclerotiniaceae</taxon>
        <taxon>Sclerotinia</taxon>
    </lineage>
</organism>
<comment type="function">
    <text evidence="1">Vacuolar carboxypeptidase involved in degradation of small peptides. Digests preferentially peptides containing an aliphatic or hydrophobic residue in P1' position, as well as methionine, leucine or phenylalanine in P1 position of ester substrate (By similarity).</text>
</comment>
<comment type="catalytic activity">
    <reaction evidence="3 4">
        <text>Release of a C-terminal amino acid with broad specificity.</text>
        <dbReference type="EC" id="3.4.16.5"/>
    </reaction>
</comment>
<comment type="subcellular location">
    <subcellularLocation>
        <location evidence="1">Vacuole</location>
    </subcellularLocation>
</comment>
<comment type="similarity">
    <text evidence="5">Belongs to the peptidase S10 family.</text>
</comment>
<sequence length="546" mass="61151">MKLLASTVLMGAAAASIAPQQQVLKNPFQSASKPISEAWSKSMESLNHLTDSMKDMTSEAKAVWDEVSTLFPEAMDRATFFQQPKPHTRKPDTAWDYVVKGADIQNVWVENSKGEKEREIDGKLEKYNMRAKKVDPTKLGVDKVKQYSGYLDDEENDKHLFYWFFESRNDPKNDPVVLWLNGGPGCSSLTGLFLELGPASIDKNGKLHNNPYSWNANASVIFLDQPVNVGYSYSGGSVSNTIAAGKDVYALLTLFFKQFPEYAKQDFHIAGESYAGHYIPVFTHEILSHKKRNINLKSVLIGNGLTDGLTQYEHYRPMACGEGGYPAVLDSSECKAMDNALPRCQSLIQSCYDSESVWSCVPASIYCNNAMMGPYQRTGQNVYDIRGKCEDSSNLCYSALGWISDYLNQAAVQKELGVEVSSYDSCNFDINRNFLFQGDWMQPFHRLVPDILEQIPVLIYAGDADFICNWLGNQAWTEALEWPGQKGFNAAKTKDLQLENGHKTGTFKSSGNFTFARIFGAGHMVPMDQPEASLDFLNKWLNDYTL</sequence>
<protein>
    <recommendedName>
        <fullName>Carboxypeptidase Y homolog A</fullName>
        <ecNumber>3.4.16.5</ecNumber>
    </recommendedName>
</protein>
<accession>A7F4H5</accession>
<feature type="signal peptide" evidence="2">
    <location>
        <begin position="1"/>
        <end position="17"/>
    </location>
</feature>
<feature type="propeptide" id="PRO_0000407476" evidence="1">
    <location>
        <begin position="18"/>
        <end position="132"/>
    </location>
</feature>
<feature type="chain" id="PRO_0000407477" description="Carboxypeptidase Y homolog A">
    <location>
        <begin position="133"/>
        <end position="546"/>
    </location>
</feature>
<feature type="active site" evidence="1">
    <location>
        <position position="273"/>
    </location>
</feature>
<feature type="active site" evidence="1">
    <location>
        <position position="465"/>
    </location>
</feature>
<feature type="active site" evidence="1">
    <location>
        <position position="523"/>
    </location>
</feature>
<feature type="glycosylation site" description="N-linked (GlcNAc...) asparagine" evidence="2">
    <location>
        <position position="217"/>
    </location>
</feature>
<feature type="glycosylation site" description="N-linked (GlcNAc...) asparagine" evidence="2">
    <location>
        <position position="512"/>
    </location>
</feature>
<feature type="disulfide bond" evidence="1">
    <location>
        <begin position="186"/>
        <end position="426"/>
    </location>
</feature>
<feature type="disulfide bond" evidence="1">
    <location>
        <begin position="320"/>
        <end position="334"/>
    </location>
</feature>
<feature type="disulfide bond" evidence="1">
    <location>
        <begin position="344"/>
        <end position="367"/>
    </location>
</feature>
<feature type="disulfide bond" evidence="1">
    <location>
        <begin position="351"/>
        <end position="360"/>
    </location>
</feature>
<feature type="disulfide bond" evidence="1">
    <location>
        <begin position="389"/>
        <end position="396"/>
    </location>
</feature>
<dbReference type="EC" id="3.4.16.5"/>
<dbReference type="EMBL" id="CH476641">
    <property type="protein sequence ID" value="EDN97646.1"/>
    <property type="molecule type" value="Genomic_DNA"/>
</dbReference>
<dbReference type="RefSeq" id="XP_001586513.1">
    <property type="nucleotide sequence ID" value="XM_001586463.1"/>
</dbReference>
<dbReference type="SMR" id="A7F4H5"/>
<dbReference type="FunCoup" id="A7F4H5">
    <property type="interactions" value="803"/>
</dbReference>
<dbReference type="STRING" id="665079.A7F4H5"/>
<dbReference type="ESTHER" id="scls1-cbpya">
    <property type="family name" value="Carboxypeptidase_S10"/>
</dbReference>
<dbReference type="MEROPS" id="S10.001"/>
<dbReference type="GlyCosmos" id="A7F4H5">
    <property type="glycosylation" value="2 sites, No reported glycans"/>
</dbReference>
<dbReference type="EnsemblFungi" id="EDN97646">
    <property type="protein sequence ID" value="EDN97646"/>
    <property type="gene ID" value="SS1G_12500"/>
</dbReference>
<dbReference type="GeneID" id="5482640"/>
<dbReference type="KEGG" id="ssl:SS1G_12500"/>
<dbReference type="VEuPathDB" id="FungiDB:sscle_06g054270"/>
<dbReference type="eggNOG" id="KOG1282">
    <property type="taxonomic scope" value="Eukaryota"/>
</dbReference>
<dbReference type="HOGENOM" id="CLU_008523_10_4_1"/>
<dbReference type="InParanoid" id="A7F4H5"/>
<dbReference type="OMA" id="GDWMKPF"/>
<dbReference type="OrthoDB" id="443318at2759"/>
<dbReference type="Proteomes" id="UP000001312">
    <property type="component" value="Unassembled WGS sequence"/>
</dbReference>
<dbReference type="GO" id="GO:0000324">
    <property type="term" value="C:fungal-type vacuole"/>
    <property type="evidence" value="ECO:0000318"/>
    <property type="project" value="GO_Central"/>
</dbReference>
<dbReference type="GO" id="GO:0004185">
    <property type="term" value="F:serine-type carboxypeptidase activity"/>
    <property type="evidence" value="ECO:0000318"/>
    <property type="project" value="GO_Central"/>
</dbReference>
<dbReference type="GO" id="GO:0006508">
    <property type="term" value="P:proteolysis"/>
    <property type="evidence" value="ECO:0007669"/>
    <property type="project" value="UniProtKB-KW"/>
</dbReference>
<dbReference type="FunFam" id="1.10.287.410:FF:000001">
    <property type="entry name" value="Carboxypeptidase Y"/>
    <property type="match status" value="1"/>
</dbReference>
<dbReference type="Gene3D" id="1.10.287.410">
    <property type="match status" value="1"/>
</dbReference>
<dbReference type="Gene3D" id="3.40.50.1820">
    <property type="entry name" value="alpha/beta hydrolase"/>
    <property type="match status" value="1"/>
</dbReference>
<dbReference type="InterPro" id="IPR029058">
    <property type="entry name" value="AB_hydrolase_fold"/>
</dbReference>
<dbReference type="InterPro" id="IPR001563">
    <property type="entry name" value="Peptidase_S10"/>
</dbReference>
<dbReference type="InterPro" id="IPR008442">
    <property type="entry name" value="Propeptide_carboxypepY"/>
</dbReference>
<dbReference type="InterPro" id="IPR033124">
    <property type="entry name" value="Ser_caboxypep_his_AS"/>
</dbReference>
<dbReference type="InterPro" id="IPR018202">
    <property type="entry name" value="Ser_caboxypep_ser_AS"/>
</dbReference>
<dbReference type="PANTHER" id="PTHR11802:SF113">
    <property type="entry name" value="SERINE CARBOXYPEPTIDASE CTSA-4.1"/>
    <property type="match status" value="1"/>
</dbReference>
<dbReference type="PANTHER" id="PTHR11802">
    <property type="entry name" value="SERINE PROTEASE FAMILY S10 SERINE CARBOXYPEPTIDASE"/>
    <property type="match status" value="1"/>
</dbReference>
<dbReference type="Pfam" id="PF05388">
    <property type="entry name" value="Carbpep_Y_N"/>
    <property type="match status" value="1"/>
</dbReference>
<dbReference type="Pfam" id="PF00450">
    <property type="entry name" value="Peptidase_S10"/>
    <property type="match status" value="1"/>
</dbReference>
<dbReference type="PRINTS" id="PR00724">
    <property type="entry name" value="CRBOXYPTASEC"/>
</dbReference>
<dbReference type="SUPFAM" id="SSF53474">
    <property type="entry name" value="alpha/beta-Hydrolases"/>
    <property type="match status" value="1"/>
</dbReference>
<dbReference type="PROSITE" id="PS00560">
    <property type="entry name" value="CARBOXYPEPT_SER_HIS"/>
    <property type="match status" value="1"/>
</dbReference>
<dbReference type="PROSITE" id="PS00131">
    <property type="entry name" value="CARBOXYPEPT_SER_SER"/>
    <property type="match status" value="1"/>
</dbReference>
<gene>
    <name type="primary">cpyA</name>
    <name type="ORF">SS1G_12500</name>
</gene>
<name>CBPYA_SCLS1</name>
<keyword id="KW-0121">Carboxypeptidase</keyword>
<keyword id="KW-1015">Disulfide bond</keyword>
<keyword id="KW-0325">Glycoprotein</keyword>
<keyword id="KW-0378">Hydrolase</keyword>
<keyword id="KW-0645">Protease</keyword>
<keyword id="KW-1185">Reference proteome</keyword>
<keyword id="KW-0732">Signal</keyword>
<keyword id="KW-0926">Vacuole</keyword>
<keyword id="KW-0865">Zymogen</keyword>
<proteinExistence type="inferred from homology"/>
<evidence type="ECO:0000250" key="1"/>
<evidence type="ECO:0000255" key="2"/>
<evidence type="ECO:0000255" key="3">
    <source>
        <dbReference type="PROSITE-ProRule" id="PRU10074"/>
    </source>
</evidence>
<evidence type="ECO:0000255" key="4">
    <source>
        <dbReference type="PROSITE-ProRule" id="PRU10075"/>
    </source>
</evidence>
<evidence type="ECO:0000305" key="5"/>
<reference key="1">
    <citation type="journal article" date="2011" name="PLoS Genet.">
        <title>Genomic analysis of the necrotrophic fungal pathogens Sclerotinia sclerotiorum and Botrytis cinerea.</title>
        <authorList>
            <person name="Amselem J."/>
            <person name="Cuomo C.A."/>
            <person name="van Kan J.A.L."/>
            <person name="Viaud M."/>
            <person name="Benito E.P."/>
            <person name="Couloux A."/>
            <person name="Coutinho P.M."/>
            <person name="de Vries R.P."/>
            <person name="Dyer P.S."/>
            <person name="Fillinger S."/>
            <person name="Fournier E."/>
            <person name="Gout L."/>
            <person name="Hahn M."/>
            <person name="Kohn L."/>
            <person name="Lapalu N."/>
            <person name="Plummer K.M."/>
            <person name="Pradier J.-M."/>
            <person name="Quevillon E."/>
            <person name="Sharon A."/>
            <person name="Simon A."/>
            <person name="ten Have A."/>
            <person name="Tudzynski B."/>
            <person name="Tudzynski P."/>
            <person name="Wincker P."/>
            <person name="Andrew M."/>
            <person name="Anthouard V."/>
            <person name="Beever R.E."/>
            <person name="Beffa R."/>
            <person name="Benoit I."/>
            <person name="Bouzid O."/>
            <person name="Brault B."/>
            <person name="Chen Z."/>
            <person name="Choquer M."/>
            <person name="Collemare J."/>
            <person name="Cotton P."/>
            <person name="Danchin E.G."/>
            <person name="Da Silva C."/>
            <person name="Gautier A."/>
            <person name="Giraud C."/>
            <person name="Giraud T."/>
            <person name="Gonzalez C."/>
            <person name="Grossetete S."/>
            <person name="Gueldener U."/>
            <person name="Henrissat B."/>
            <person name="Howlett B.J."/>
            <person name="Kodira C."/>
            <person name="Kretschmer M."/>
            <person name="Lappartient A."/>
            <person name="Leroch M."/>
            <person name="Levis C."/>
            <person name="Mauceli E."/>
            <person name="Neuveglise C."/>
            <person name="Oeser B."/>
            <person name="Pearson M."/>
            <person name="Poulain J."/>
            <person name="Poussereau N."/>
            <person name="Quesneville H."/>
            <person name="Rascle C."/>
            <person name="Schumacher J."/>
            <person name="Segurens B."/>
            <person name="Sexton A."/>
            <person name="Silva E."/>
            <person name="Sirven C."/>
            <person name="Soanes D.M."/>
            <person name="Talbot N.J."/>
            <person name="Templeton M."/>
            <person name="Yandava C."/>
            <person name="Yarden O."/>
            <person name="Zeng Q."/>
            <person name="Rollins J.A."/>
            <person name="Lebrun M.-H."/>
            <person name="Dickman M."/>
        </authorList>
    </citation>
    <scope>NUCLEOTIDE SEQUENCE [LARGE SCALE GENOMIC DNA]</scope>
    <source>
        <strain>ATCC 18683 / 1980 / Ss-1</strain>
    </source>
</reference>